<keyword id="KW-0963">Cytoplasm</keyword>
<keyword id="KW-0312">Gluconeogenesis</keyword>
<keyword id="KW-0324">Glycolysis</keyword>
<keyword id="KW-0413">Isomerase</keyword>
<comment type="function">
    <text evidence="1">Involved in the gluconeogenesis. Catalyzes stereospecifically the conversion of dihydroxyacetone phosphate (DHAP) to D-glyceraldehyde-3-phosphate (G3P).</text>
</comment>
<comment type="catalytic activity">
    <reaction evidence="1">
        <text>D-glyceraldehyde 3-phosphate = dihydroxyacetone phosphate</text>
        <dbReference type="Rhea" id="RHEA:18585"/>
        <dbReference type="ChEBI" id="CHEBI:57642"/>
        <dbReference type="ChEBI" id="CHEBI:59776"/>
        <dbReference type="EC" id="5.3.1.1"/>
    </reaction>
</comment>
<comment type="pathway">
    <text evidence="1">Carbohydrate biosynthesis; gluconeogenesis.</text>
</comment>
<comment type="pathway">
    <text evidence="1">Carbohydrate degradation; glycolysis; D-glyceraldehyde 3-phosphate from glycerone phosphate: step 1/1.</text>
</comment>
<comment type="subunit">
    <text evidence="1">Homodimer.</text>
</comment>
<comment type="subcellular location">
    <subcellularLocation>
        <location evidence="1">Cytoplasm</location>
    </subcellularLocation>
</comment>
<comment type="similarity">
    <text evidence="1">Belongs to the triosephosphate isomerase family.</text>
</comment>
<protein>
    <recommendedName>
        <fullName evidence="1">Triosephosphate isomerase</fullName>
        <shortName evidence="1">TIM</shortName>
        <shortName evidence="1">TPI</shortName>
        <ecNumber evidence="1">5.3.1.1</ecNumber>
    </recommendedName>
    <alternativeName>
        <fullName evidence="1">Triose-phosphate isomerase</fullName>
    </alternativeName>
</protein>
<gene>
    <name evidence="1" type="primary">tpiA</name>
    <name type="ordered locus">BARBAKC583_0528</name>
</gene>
<organism>
    <name type="scientific">Bartonella bacilliformis (strain ATCC 35685 / KC583 / Herrer 020/F12,63)</name>
    <dbReference type="NCBI Taxonomy" id="360095"/>
    <lineage>
        <taxon>Bacteria</taxon>
        <taxon>Pseudomonadati</taxon>
        <taxon>Pseudomonadota</taxon>
        <taxon>Alphaproteobacteria</taxon>
        <taxon>Hyphomicrobiales</taxon>
        <taxon>Bartonellaceae</taxon>
        <taxon>Bartonella</taxon>
    </lineage>
</organism>
<sequence>MTSSIRPLLAGNWKMNGTSESLRELRAIASGIDSDRDRCFEALVCVPATLLSRASDILSDENIFLGGQDCHFNDSGPHTGDISACMLKEAGASHVILGHSERRTDYRESDAIVCAKVKAAWRAGLVALICIGETLEERENNTVLDVLAQQLKGSVPAGAMDHNTVIAYEPRWAIGTGKTPTSEDIAQVHGFIRKEVSHRFGDEGHKIRLLYGGSVKPSNASELLETSHVNGALIGGASLKATDFLTICNIYRKL</sequence>
<feature type="chain" id="PRO_0000307433" description="Triosephosphate isomerase">
    <location>
        <begin position="1"/>
        <end position="254"/>
    </location>
</feature>
<feature type="active site" description="Electrophile" evidence="1">
    <location>
        <position position="99"/>
    </location>
</feature>
<feature type="active site" description="Proton acceptor" evidence="1">
    <location>
        <position position="169"/>
    </location>
</feature>
<feature type="binding site" evidence="1">
    <location>
        <begin position="12"/>
        <end position="14"/>
    </location>
    <ligand>
        <name>substrate</name>
    </ligand>
</feature>
<feature type="binding site" evidence="1">
    <location>
        <position position="175"/>
    </location>
    <ligand>
        <name>substrate</name>
    </ligand>
</feature>
<feature type="binding site" evidence="1">
    <location>
        <position position="214"/>
    </location>
    <ligand>
        <name>substrate</name>
    </ligand>
</feature>
<feature type="binding site" evidence="1">
    <location>
        <begin position="235"/>
        <end position="236"/>
    </location>
    <ligand>
        <name>substrate</name>
    </ligand>
</feature>
<reference key="1">
    <citation type="submission" date="2006-12" db="EMBL/GenBank/DDBJ databases">
        <authorList>
            <person name="Hendrix L."/>
            <person name="Mohamoud Y."/>
            <person name="Radune D."/>
            <person name="Shvartsbeyn A."/>
            <person name="Daugherty S."/>
            <person name="Dodson R."/>
            <person name="Durkin A.S."/>
            <person name="Harkins D."/>
            <person name="Huot H."/>
            <person name="Kothari S.P."/>
            <person name="Madupu R."/>
            <person name="Li J."/>
            <person name="Nelson W.C."/>
            <person name="Shrivastava S."/>
            <person name="Giglio M.G."/>
            <person name="Haft D."/>
            <person name="Selengut J."/>
            <person name="Fraser-Ligget C."/>
            <person name="Seshadri R."/>
        </authorList>
    </citation>
    <scope>NUCLEOTIDE SEQUENCE [LARGE SCALE GENOMIC DNA]</scope>
    <source>
        <strain>ATCC 35685 / KC583 / Herrer 020/F12,63</strain>
    </source>
</reference>
<accession>A1US90</accession>
<name>TPIS_BARBK</name>
<proteinExistence type="inferred from homology"/>
<evidence type="ECO:0000255" key="1">
    <source>
        <dbReference type="HAMAP-Rule" id="MF_00147"/>
    </source>
</evidence>
<dbReference type="EC" id="5.3.1.1" evidence="1"/>
<dbReference type="EMBL" id="CP000524">
    <property type="protein sequence ID" value="ABM44445.1"/>
    <property type="molecule type" value="Genomic_DNA"/>
</dbReference>
<dbReference type="RefSeq" id="WP_005766648.1">
    <property type="nucleotide sequence ID" value="NC_008783.1"/>
</dbReference>
<dbReference type="SMR" id="A1US90"/>
<dbReference type="STRING" id="360095.BARBAKC583_0528"/>
<dbReference type="GeneID" id="4684665"/>
<dbReference type="KEGG" id="bbk:BARBAKC583_0528"/>
<dbReference type="PATRIC" id="fig|360095.6.peg.512"/>
<dbReference type="eggNOG" id="COG0149">
    <property type="taxonomic scope" value="Bacteria"/>
</dbReference>
<dbReference type="HOGENOM" id="CLU_024251_2_1_5"/>
<dbReference type="OrthoDB" id="9809429at2"/>
<dbReference type="UniPathway" id="UPA00109">
    <property type="reaction ID" value="UER00189"/>
</dbReference>
<dbReference type="UniPathway" id="UPA00138"/>
<dbReference type="Proteomes" id="UP000000643">
    <property type="component" value="Chromosome"/>
</dbReference>
<dbReference type="GO" id="GO:0005829">
    <property type="term" value="C:cytosol"/>
    <property type="evidence" value="ECO:0007669"/>
    <property type="project" value="TreeGrafter"/>
</dbReference>
<dbReference type="GO" id="GO:0004807">
    <property type="term" value="F:triose-phosphate isomerase activity"/>
    <property type="evidence" value="ECO:0007669"/>
    <property type="project" value="UniProtKB-UniRule"/>
</dbReference>
<dbReference type="GO" id="GO:0006094">
    <property type="term" value="P:gluconeogenesis"/>
    <property type="evidence" value="ECO:0007669"/>
    <property type="project" value="UniProtKB-UniRule"/>
</dbReference>
<dbReference type="GO" id="GO:0046166">
    <property type="term" value="P:glyceraldehyde-3-phosphate biosynthetic process"/>
    <property type="evidence" value="ECO:0007669"/>
    <property type="project" value="TreeGrafter"/>
</dbReference>
<dbReference type="GO" id="GO:0019563">
    <property type="term" value="P:glycerol catabolic process"/>
    <property type="evidence" value="ECO:0007669"/>
    <property type="project" value="TreeGrafter"/>
</dbReference>
<dbReference type="GO" id="GO:0006096">
    <property type="term" value="P:glycolytic process"/>
    <property type="evidence" value="ECO:0007669"/>
    <property type="project" value="UniProtKB-UniRule"/>
</dbReference>
<dbReference type="CDD" id="cd00311">
    <property type="entry name" value="TIM"/>
    <property type="match status" value="1"/>
</dbReference>
<dbReference type="FunFam" id="3.20.20.70:FF:000016">
    <property type="entry name" value="Triosephosphate isomerase"/>
    <property type="match status" value="1"/>
</dbReference>
<dbReference type="Gene3D" id="3.20.20.70">
    <property type="entry name" value="Aldolase class I"/>
    <property type="match status" value="1"/>
</dbReference>
<dbReference type="HAMAP" id="MF_00147_B">
    <property type="entry name" value="TIM_B"/>
    <property type="match status" value="1"/>
</dbReference>
<dbReference type="InterPro" id="IPR013785">
    <property type="entry name" value="Aldolase_TIM"/>
</dbReference>
<dbReference type="InterPro" id="IPR035990">
    <property type="entry name" value="TIM_sf"/>
</dbReference>
<dbReference type="InterPro" id="IPR022896">
    <property type="entry name" value="TrioseP_Isoase_bac/euk"/>
</dbReference>
<dbReference type="InterPro" id="IPR000652">
    <property type="entry name" value="Triosephosphate_isomerase"/>
</dbReference>
<dbReference type="NCBIfam" id="TIGR00419">
    <property type="entry name" value="tim"/>
    <property type="match status" value="1"/>
</dbReference>
<dbReference type="PANTHER" id="PTHR21139">
    <property type="entry name" value="TRIOSEPHOSPHATE ISOMERASE"/>
    <property type="match status" value="1"/>
</dbReference>
<dbReference type="PANTHER" id="PTHR21139:SF42">
    <property type="entry name" value="TRIOSEPHOSPHATE ISOMERASE"/>
    <property type="match status" value="1"/>
</dbReference>
<dbReference type="Pfam" id="PF00121">
    <property type="entry name" value="TIM"/>
    <property type="match status" value="1"/>
</dbReference>
<dbReference type="SUPFAM" id="SSF51351">
    <property type="entry name" value="Triosephosphate isomerase (TIM)"/>
    <property type="match status" value="1"/>
</dbReference>
<dbReference type="PROSITE" id="PS51440">
    <property type="entry name" value="TIM_2"/>
    <property type="match status" value="1"/>
</dbReference>